<reference key="1">
    <citation type="journal article" date="2002" name="Proc. Natl. Acad. Sci. U.S.A.">
        <title>The Brucella suis genome reveals fundamental similarities between animal and plant pathogens and symbionts.</title>
        <authorList>
            <person name="Paulsen I.T."/>
            <person name="Seshadri R."/>
            <person name="Nelson K.E."/>
            <person name="Eisen J.A."/>
            <person name="Heidelberg J.F."/>
            <person name="Read T.D."/>
            <person name="Dodson R.J."/>
            <person name="Umayam L.A."/>
            <person name="Brinkac L.M."/>
            <person name="Beanan M.J."/>
            <person name="Daugherty S.C."/>
            <person name="DeBoy R.T."/>
            <person name="Durkin A.S."/>
            <person name="Kolonay J.F."/>
            <person name="Madupu R."/>
            <person name="Nelson W.C."/>
            <person name="Ayodeji B."/>
            <person name="Kraul M."/>
            <person name="Shetty J."/>
            <person name="Malek J.A."/>
            <person name="Van Aken S.E."/>
            <person name="Riedmuller S."/>
            <person name="Tettelin H."/>
            <person name="Gill S.R."/>
            <person name="White O."/>
            <person name="Salzberg S.L."/>
            <person name="Hoover D.L."/>
            <person name="Lindler L.E."/>
            <person name="Halling S.M."/>
            <person name="Boyle S.M."/>
            <person name="Fraser C.M."/>
        </authorList>
    </citation>
    <scope>NUCLEOTIDE SEQUENCE [LARGE SCALE GENOMIC DNA]</scope>
    <source>
        <strain>1330</strain>
    </source>
</reference>
<reference key="2">
    <citation type="journal article" date="2011" name="J. Bacteriol.">
        <title>Revised genome sequence of Brucella suis 1330.</title>
        <authorList>
            <person name="Tae H."/>
            <person name="Shallom S."/>
            <person name="Settlage R."/>
            <person name="Preston D."/>
            <person name="Adams L.G."/>
            <person name="Garner H.R."/>
        </authorList>
    </citation>
    <scope>NUCLEOTIDE SEQUENCE [LARGE SCALE GENOMIC DNA]</scope>
    <source>
        <strain>1330</strain>
    </source>
</reference>
<evidence type="ECO:0000255" key="1">
    <source>
        <dbReference type="HAMAP-Rule" id="MF_01307"/>
    </source>
</evidence>
<evidence type="ECO:0000305" key="2"/>
<organism>
    <name type="scientific">Brucella suis biovar 1 (strain 1330)</name>
    <dbReference type="NCBI Taxonomy" id="204722"/>
    <lineage>
        <taxon>Bacteria</taxon>
        <taxon>Pseudomonadati</taxon>
        <taxon>Pseudomonadota</taxon>
        <taxon>Alphaproteobacteria</taxon>
        <taxon>Hyphomicrobiales</taxon>
        <taxon>Brucellaceae</taxon>
        <taxon>Brucella/Ochrobactrum group</taxon>
        <taxon>Brucella</taxon>
    </lineage>
</organism>
<name>RS5_BRUSU</name>
<keyword id="KW-0687">Ribonucleoprotein</keyword>
<keyword id="KW-0689">Ribosomal protein</keyword>
<keyword id="KW-0694">RNA-binding</keyword>
<keyword id="KW-0699">rRNA-binding</keyword>
<comment type="function">
    <text evidence="1">With S4 and S12 plays an important role in translational accuracy.</text>
</comment>
<comment type="function">
    <text evidence="1">Located at the back of the 30S subunit body where it stabilizes the conformation of the head with respect to the body.</text>
</comment>
<comment type="subunit">
    <text evidence="1">Part of the 30S ribosomal subunit. Contacts proteins S4 and S8.</text>
</comment>
<comment type="domain">
    <text>The N-terminal domain interacts with the head of the 30S subunit; the C-terminal domain interacts with the body and contacts protein S4. The interaction surface between S4 and S5 is involved in control of translational fidelity.</text>
</comment>
<comment type="similarity">
    <text evidence="1">Belongs to the universal ribosomal protein uS5 family.</text>
</comment>
<accession>P66571</accession>
<accession>G0KAD7</accession>
<accession>Q8YHM3</accession>
<proteinExistence type="inferred from homology"/>
<dbReference type="EMBL" id="AE014291">
    <property type="protein sequence ID" value="AAN30135.1"/>
    <property type="molecule type" value="Genomic_DNA"/>
</dbReference>
<dbReference type="EMBL" id="CP002997">
    <property type="protein sequence ID" value="AEM18553.1"/>
    <property type="molecule type" value="Genomic_DNA"/>
</dbReference>
<dbReference type="RefSeq" id="WP_002964345.1">
    <property type="nucleotide sequence ID" value="NZ_KN046804.1"/>
</dbReference>
<dbReference type="SMR" id="P66571"/>
<dbReference type="GeneID" id="93016456"/>
<dbReference type="KEGG" id="bms:BR1216"/>
<dbReference type="KEGG" id="bsi:BS1330_I1212"/>
<dbReference type="PATRIC" id="fig|204722.21.peg.2260"/>
<dbReference type="HOGENOM" id="CLU_065898_2_2_5"/>
<dbReference type="PhylomeDB" id="P66571"/>
<dbReference type="Proteomes" id="UP000007104">
    <property type="component" value="Chromosome I"/>
</dbReference>
<dbReference type="GO" id="GO:0015935">
    <property type="term" value="C:small ribosomal subunit"/>
    <property type="evidence" value="ECO:0007669"/>
    <property type="project" value="InterPro"/>
</dbReference>
<dbReference type="GO" id="GO:0019843">
    <property type="term" value="F:rRNA binding"/>
    <property type="evidence" value="ECO:0007669"/>
    <property type="project" value="UniProtKB-UniRule"/>
</dbReference>
<dbReference type="GO" id="GO:0003735">
    <property type="term" value="F:structural constituent of ribosome"/>
    <property type="evidence" value="ECO:0007669"/>
    <property type="project" value="InterPro"/>
</dbReference>
<dbReference type="GO" id="GO:0006412">
    <property type="term" value="P:translation"/>
    <property type="evidence" value="ECO:0007669"/>
    <property type="project" value="UniProtKB-UniRule"/>
</dbReference>
<dbReference type="FunFam" id="3.30.160.20:FF:000001">
    <property type="entry name" value="30S ribosomal protein S5"/>
    <property type="match status" value="1"/>
</dbReference>
<dbReference type="FunFam" id="3.30.230.10:FF:000002">
    <property type="entry name" value="30S ribosomal protein S5"/>
    <property type="match status" value="1"/>
</dbReference>
<dbReference type="Gene3D" id="3.30.160.20">
    <property type="match status" value="1"/>
</dbReference>
<dbReference type="Gene3D" id="3.30.230.10">
    <property type="match status" value="1"/>
</dbReference>
<dbReference type="HAMAP" id="MF_01307_B">
    <property type="entry name" value="Ribosomal_uS5_B"/>
    <property type="match status" value="1"/>
</dbReference>
<dbReference type="InterPro" id="IPR020568">
    <property type="entry name" value="Ribosomal_Su5_D2-typ_SF"/>
</dbReference>
<dbReference type="InterPro" id="IPR000851">
    <property type="entry name" value="Ribosomal_uS5"/>
</dbReference>
<dbReference type="InterPro" id="IPR005712">
    <property type="entry name" value="Ribosomal_uS5_bac-type"/>
</dbReference>
<dbReference type="InterPro" id="IPR005324">
    <property type="entry name" value="Ribosomal_uS5_C"/>
</dbReference>
<dbReference type="InterPro" id="IPR013810">
    <property type="entry name" value="Ribosomal_uS5_N"/>
</dbReference>
<dbReference type="InterPro" id="IPR018192">
    <property type="entry name" value="Ribosomal_uS5_N_CS"/>
</dbReference>
<dbReference type="InterPro" id="IPR014721">
    <property type="entry name" value="Ribsml_uS5_D2-typ_fold_subgr"/>
</dbReference>
<dbReference type="NCBIfam" id="TIGR01021">
    <property type="entry name" value="rpsE_bact"/>
    <property type="match status" value="1"/>
</dbReference>
<dbReference type="PANTHER" id="PTHR48277">
    <property type="entry name" value="MITOCHONDRIAL RIBOSOMAL PROTEIN S5"/>
    <property type="match status" value="1"/>
</dbReference>
<dbReference type="PANTHER" id="PTHR48277:SF1">
    <property type="entry name" value="MITOCHONDRIAL RIBOSOMAL PROTEIN S5"/>
    <property type="match status" value="1"/>
</dbReference>
<dbReference type="Pfam" id="PF00333">
    <property type="entry name" value="Ribosomal_S5"/>
    <property type="match status" value="1"/>
</dbReference>
<dbReference type="Pfam" id="PF03719">
    <property type="entry name" value="Ribosomal_S5_C"/>
    <property type="match status" value="1"/>
</dbReference>
<dbReference type="SUPFAM" id="SSF54768">
    <property type="entry name" value="dsRNA-binding domain-like"/>
    <property type="match status" value="1"/>
</dbReference>
<dbReference type="SUPFAM" id="SSF54211">
    <property type="entry name" value="Ribosomal protein S5 domain 2-like"/>
    <property type="match status" value="1"/>
</dbReference>
<dbReference type="PROSITE" id="PS00585">
    <property type="entry name" value="RIBOSOMAL_S5"/>
    <property type="match status" value="1"/>
</dbReference>
<dbReference type="PROSITE" id="PS50881">
    <property type="entry name" value="S5_DSRBD"/>
    <property type="match status" value="1"/>
</dbReference>
<feature type="chain" id="PRO_0000131484" description="Small ribosomal subunit protein uS5">
    <location>
        <begin position="1"/>
        <end position="186"/>
    </location>
</feature>
<feature type="domain" description="S5 DRBM" evidence="1">
    <location>
        <begin position="20"/>
        <end position="83"/>
    </location>
</feature>
<protein>
    <recommendedName>
        <fullName evidence="1">Small ribosomal subunit protein uS5</fullName>
    </recommendedName>
    <alternativeName>
        <fullName evidence="2">30S ribosomal protein S5</fullName>
    </alternativeName>
</protein>
<gene>
    <name evidence="1" type="primary">rpsE</name>
    <name type="ordered locus">BR1216</name>
    <name type="ordered locus">BS1330_I1212</name>
</gene>
<sequence>MAQRERNREERGREERDSEFVDKLVHINRVAKVVKGGRRFGFAALVVVGDQKGRVGFGHGKAREVPEAIRKATEAAKRDMIFVPLRSGRTLHHDVEGRHGAGKVLLRAAPAGKGIIAGGPMRAVFETLGVQDVVAKSLGSSNPYNMVRATFDALKHQMHPKDIAAQRGIKYSTLQARRHDVVGSEE</sequence>